<reference key="1">
    <citation type="journal article" date="2011" name="MBio">
        <title>Novel metabolic attributes of the genus Cyanothece, comprising a group of unicellular nitrogen-fixing Cyanobacteria.</title>
        <authorList>
            <person name="Bandyopadhyay A."/>
            <person name="Elvitigala T."/>
            <person name="Welsh E."/>
            <person name="Stockel J."/>
            <person name="Liberton M."/>
            <person name="Min H."/>
            <person name="Sherman L.A."/>
            <person name="Pakrasi H.B."/>
        </authorList>
    </citation>
    <scope>NUCLEOTIDE SEQUENCE [LARGE SCALE GENOMIC DNA]</scope>
    <source>
        <strain>PCC 8801 / RF-1</strain>
    </source>
</reference>
<evidence type="ECO:0000255" key="1">
    <source>
        <dbReference type="HAMAP-Rule" id="MF_00050"/>
    </source>
</evidence>
<evidence type="ECO:0000256" key="2">
    <source>
        <dbReference type="SAM" id="MobiDB-lite"/>
    </source>
</evidence>
<accession>B7K4S9</accession>
<protein>
    <recommendedName>
        <fullName evidence="1">Elongation factor Ts</fullName>
        <shortName evidence="1">EF-Ts</shortName>
    </recommendedName>
</protein>
<organism>
    <name type="scientific">Rippkaea orientalis (strain PCC 8801 / RF-1)</name>
    <name type="common">Cyanothece sp. (strain PCC 8801)</name>
    <dbReference type="NCBI Taxonomy" id="41431"/>
    <lineage>
        <taxon>Bacteria</taxon>
        <taxon>Bacillati</taxon>
        <taxon>Cyanobacteriota</taxon>
        <taxon>Cyanophyceae</taxon>
        <taxon>Oscillatoriophycideae</taxon>
        <taxon>Chroococcales</taxon>
        <taxon>Aphanothecaceae</taxon>
        <taxon>Rippkaea</taxon>
        <taxon>Rippkaea orientalis</taxon>
    </lineage>
</organism>
<gene>
    <name evidence="1" type="primary">tsf</name>
    <name type="ordered locus">PCC8801_2579</name>
</gene>
<proteinExistence type="inferred from homology"/>
<comment type="function">
    <text evidence="1">Associates with the EF-Tu.GDP complex and induces the exchange of GDP to GTP. It remains bound to the aminoacyl-tRNA.EF-Tu.GTP complex up to the GTP hydrolysis stage on the ribosome.</text>
</comment>
<comment type="subcellular location">
    <subcellularLocation>
        <location evidence="1">Cytoplasm</location>
    </subcellularLocation>
</comment>
<comment type="similarity">
    <text evidence="1">Belongs to the EF-Ts family.</text>
</comment>
<feature type="chain" id="PRO_1000116723" description="Elongation factor Ts">
    <location>
        <begin position="1"/>
        <end position="249"/>
    </location>
</feature>
<feature type="region of interest" description="Involved in Mg(2+) ion dislocation from EF-Tu" evidence="1">
    <location>
        <begin position="82"/>
        <end position="85"/>
    </location>
</feature>
<feature type="region of interest" description="Disordered" evidence="2">
    <location>
        <begin position="215"/>
        <end position="249"/>
    </location>
</feature>
<feature type="compositionally biased region" description="Low complexity" evidence="2">
    <location>
        <begin position="222"/>
        <end position="236"/>
    </location>
</feature>
<keyword id="KW-0963">Cytoplasm</keyword>
<keyword id="KW-0251">Elongation factor</keyword>
<keyword id="KW-0648">Protein biosynthesis</keyword>
<keyword id="KW-1185">Reference proteome</keyword>
<dbReference type="EMBL" id="CP001287">
    <property type="protein sequence ID" value="ACK66585.1"/>
    <property type="molecule type" value="Genomic_DNA"/>
</dbReference>
<dbReference type="RefSeq" id="WP_012595852.1">
    <property type="nucleotide sequence ID" value="NC_011726.1"/>
</dbReference>
<dbReference type="SMR" id="B7K4S9"/>
<dbReference type="STRING" id="41431.PCC8801_2579"/>
<dbReference type="KEGG" id="cyp:PCC8801_2579"/>
<dbReference type="eggNOG" id="COG0264">
    <property type="taxonomic scope" value="Bacteria"/>
</dbReference>
<dbReference type="HOGENOM" id="CLU_047155_1_0_3"/>
<dbReference type="OrthoDB" id="9808348at2"/>
<dbReference type="Proteomes" id="UP000008204">
    <property type="component" value="Chromosome"/>
</dbReference>
<dbReference type="GO" id="GO:0005737">
    <property type="term" value="C:cytoplasm"/>
    <property type="evidence" value="ECO:0007669"/>
    <property type="project" value="UniProtKB-SubCell"/>
</dbReference>
<dbReference type="GO" id="GO:0003746">
    <property type="term" value="F:translation elongation factor activity"/>
    <property type="evidence" value="ECO:0007669"/>
    <property type="project" value="UniProtKB-UniRule"/>
</dbReference>
<dbReference type="CDD" id="cd14275">
    <property type="entry name" value="UBA_EF-Ts"/>
    <property type="match status" value="1"/>
</dbReference>
<dbReference type="FunFam" id="1.10.286.20:FF:000001">
    <property type="entry name" value="Elongation factor Ts"/>
    <property type="match status" value="1"/>
</dbReference>
<dbReference type="FunFam" id="1.10.8.10:FF:000001">
    <property type="entry name" value="Elongation factor Ts"/>
    <property type="match status" value="1"/>
</dbReference>
<dbReference type="Gene3D" id="1.10.286.20">
    <property type="match status" value="1"/>
</dbReference>
<dbReference type="Gene3D" id="1.10.8.10">
    <property type="entry name" value="DNA helicase RuvA subunit, C-terminal domain"/>
    <property type="match status" value="1"/>
</dbReference>
<dbReference type="Gene3D" id="3.30.479.20">
    <property type="entry name" value="Elongation factor Ts, dimerisation domain"/>
    <property type="match status" value="1"/>
</dbReference>
<dbReference type="HAMAP" id="MF_00050">
    <property type="entry name" value="EF_Ts"/>
    <property type="match status" value="1"/>
</dbReference>
<dbReference type="InterPro" id="IPR036402">
    <property type="entry name" value="EF-Ts_dimer_sf"/>
</dbReference>
<dbReference type="InterPro" id="IPR001816">
    <property type="entry name" value="Transl_elong_EFTs/EF1B"/>
</dbReference>
<dbReference type="InterPro" id="IPR014039">
    <property type="entry name" value="Transl_elong_EFTs/EF1B_dimer"/>
</dbReference>
<dbReference type="InterPro" id="IPR018101">
    <property type="entry name" value="Transl_elong_Ts_CS"/>
</dbReference>
<dbReference type="InterPro" id="IPR009060">
    <property type="entry name" value="UBA-like_sf"/>
</dbReference>
<dbReference type="NCBIfam" id="TIGR00116">
    <property type="entry name" value="tsf"/>
    <property type="match status" value="2"/>
</dbReference>
<dbReference type="PANTHER" id="PTHR11741">
    <property type="entry name" value="ELONGATION FACTOR TS"/>
    <property type="match status" value="1"/>
</dbReference>
<dbReference type="PANTHER" id="PTHR11741:SF10">
    <property type="entry name" value="POLYPROTEIN OF EF-TS, CHLOROPLASTIC"/>
    <property type="match status" value="1"/>
</dbReference>
<dbReference type="Pfam" id="PF00889">
    <property type="entry name" value="EF_TS"/>
    <property type="match status" value="1"/>
</dbReference>
<dbReference type="SUPFAM" id="SSF54713">
    <property type="entry name" value="Elongation factor Ts (EF-Ts), dimerisation domain"/>
    <property type="match status" value="1"/>
</dbReference>
<dbReference type="SUPFAM" id="SSF46934">
    <property type="entry name" value="UBA-like"/>
    <property type="match status" value="1"/>
</dbReference>
<dbReference type="PROSITE" id="PS01126">
    <property type="entry name" value="EF_TS_1"/>
    <property type="match status" value="1"/>
</dbReference>
<dbReference type="PROSITE" id="PS01127">
    <property type="entry name" value="EF_TS_2"/>
    <property type="match status" value="1"/>
</dbReference>
<sequence length="249" mass="27860">MAEISAKQVKELRETTGAGMMDCKKALQENQGDMTKAIEWLRQKGITSAEKKSGRQTAEGLVESYIHTGGRIGVLVEVNCETDFVARREEFKELVRNVAMQIAACPNVEYIQGSDIPEAVVAKEKEIEMGRDDLGNKPDNIKEKIVQGRIEKRIKELCLLDQPYIRDQNVTVEELIKQTIAQLGENIQVRRFTRFVLGEGIEKQEVDFAREVAEQAGQLAPEAESTTETADATSETTTEKSSAKKKKKK</sequence>
<name>EFTS_RIPO1</name>